<name>V21_SPTNK</name>
<feature type="chain" id="PRO_0000369829" description="Uncharacterized protein V21">
    <location>
        <begin position="1"/>
        <end position="442"/>
    </location>
</feature>
<keyword id="KW-1185">Reference proteome</keyword>
<organism>
    <name type="scientific">Sputnik virophage</name>
    <dbReference type="NCBI Taxonomy" id="543939"/>
    <lineage>
        <taxon>Viruses</taxon>
        <taxon>Varidnaviria</taxon>
        <taxon>Bamfordvirae</taxon>
        <taxon>Preplasmiviricota</taxon>
        <taxon>Maveriviricetes</taxon>
        <taxon>Priklausovirales</taxon>
        <taxon>Lavidaviridae</taxon>
        <taxon>Sputnikvirus</taxon>
        <taxon>Mimivirus-dependent virus Sputnik</taxon>
    </lineage>
</organism>
<reference key="1">
    <citation type="journal article" date="2008" name="Nature">
        <title>The virophage as a unique parasite of the giant mimivirus.</title>
        <authorList>
            <person name="La Scola B."/>
            <person name="Desnues C."/>
            <person name="Pagnier I."/>
            <person name="Robert C."/>
            <person name="Barrassi L."/>
            <person name="Fournous G."/>
            <person name="Merchat M."/>
            <person name="Suzan-Monti M."/>
            <person name="Forterre P."/>
            <person name="Koonin E."/>
            <person name="Raoult D."/>
        </authorList>
    </citation>
    <scope>NUCLEOTIDE SEQUENCE [GENOMIC DNA]</scope>
</reference>
<accession>B4YNG1</accession>
<organismHost>
    <name type="scientific">Acanthamoeba polyphaga</name>
    <name type="common">Amoeba</name>
    <dbReference type="NCBI Taxonomy" id="5757"/>
</organismHost>
<gene>
    <name type="ORF">ORF21</name>
</gene>
<proteinExistence type="predicted"/>
<sequence>MNIRVQDYFDHPYIYVDPRETKPFESYTNEQVENIRLLSVTADPTQMARPFGSATYRIQKYPGDLDLQEEFFDCCTMEHVVKKFAKKLQDVVKRINKSKLHYFSEFKAGVDSRYDINIGKIKDGIYTPSLNLTDKIKRLYGKGLLNDKEHETLMRALSNEVLGGDEYDVVNYTLRERKVLRWTDEEVLKGQKKLPKNKIISLSNALKAKSNVKIDMIAYVNDQFVEVTNFYILILINPDSGTLDTINFDFDYLDDQVLGKQYDIQIKDEVQKLYYSNMYYSPFKMVKRMWAYSRSFRMMDDVNTLLPIVGGNISLLYQIVSELNTILRLYEVGKSTPEKTINKRLERLAYNLANVVELDKEMLVNITAVIDSLETYRGQQKAIQMKQFVIKPLKNFINGLTIIKLNQIGYNPPPERFLPYPLKYGAITRIPFEDVQNPLNKY</sequence>
<protein>
    <recommendedName>
        <fullName>Uncharacterized protein V21</fullName>
    </recommendedName>
</protein>
<dbReference type="EMBL" id="EU606015">
    <property type="protein sequence ID" value="ACF17005.1"/>
    <property type="molecule type" value="Genomic_DNA"/>
</dbReference>
<dbReference type="RefSeq" id="YP_002122382.1">
    <property type="nucleotide sequence ID" value="NC_011132.1"/>
</dbReference>
<dbReference type="KEGG" id="vg:6760332"/>
<dbReference type="OrthoDB" id="26684at10239"/>
<dbReference type="Proteomes" id="UP000001863">
    <property type="component" value="Segment"/>
</dbReference>